<name>GLSA_SHEB9</name>
<dbReference type="EC" id="3.5.1.2" evidence="1"/>
<dbReference type="EMBL" id="CP000891">
    <property type="protein sequence ID" value="ABX50355.1"/>
    <property type="molecule type" value="Genomic_DNA"/>
</dbReference>
<dbReference type="SMR" id="A9KXQ3"/>
<dbReference type="KEGG" id="sbn:Sbal195_3193"/>
<dbReference type="HOGENOM" id="CLU_027932_1_1_6"/>
<dbReference type="Proteomes" id="UP000000770">
    <property type="component" value="Chromosome"/>
</dbReference>
<dbReference type="GO" id="GO:0004359">
    <property type="term" value="F:glutaminase activity"/>
    <property type="evidence" value="ECO:0007669"/>
    <property type="project" value="UniProtKB-UniRule"/>
</dbReference>
<dbReference type="GO" id="GO:0006537">
    <property type="term" value="P:glutamate biosynthetic process"/>
    <property type="evidence" value="ECO:0007669"/>
    <property type="project" value="TreeGrafter"/>
</dbReference>
<dbReference type="GO" id="GO:0006543">
    <property type="term" value="P:glutamine catabolic process"/>
    <property type="evidence" value="ECO:0007669"/>
    <property type="project" value="TreeGrafter"/>
</dbReference>
<dbReference type="FunFam" id="3.40.710.10:FF:000005">
    <property type="entry name" value="Glutaminase"/>
    <property type="match status" value="1"/>
</dbReference>
<dbReference type="Gene3D" id="3.40.710.10">
    <property type="entry name" value="DD-peptidase/beta-lactamase superfamily"/>
    <property type="match status" value="1"/>
</dbReference>
<dbReference type="HAMAP" id="MF_00313">
    <property type="entry name" value="Glutaminase"/>
    <property type="match status" value="1"/>
</dbReference>
<dbReference type="InterPro" id="IPR012338">
    <property type="entry name" value="Beta-lactam/transpept-like"/>
</dbReference>
<dbReference type="InterPro" id="IPR015868">
    <property type="entry name" value="Glutaminase"/>
</dbReference>
<dbReference type="NCBIfam" id="TIGR03814">
    <property type="entry name" value="Gln_ase"/>
    <property type="match status" value="1"/>
</dbReference>
<dbReference type="NCBIfam" id="NF002132">
    <property type="entry name" value="PRK00971.1-1"/>
    <property type="match status" value="1"/>
</dbReference>
<dbReference type="NCBIfam" id="NF002133">
    <property type="entry name" value="PRK00971.1-2"/>
    <property type="match status" value="1"/>
</dbReference>
<dbReference type="PANTHER" id="PTHR12544">
    <property type="entry name" value="GLUTAMINASE"/>
    <property type="match status" value="1"/>
</dbReference>
<dbReference type="PANTHER" id="PTHR12544:SF29">
    <property type="entry name" value="GLUTAMINASE"/>
    <property type="match status" value="1"/>
</dbReference>
<dbReference type="Pfam" id="PF04960">
    <property type="entry name" value="Glutaminase"/>
    <property type="match status" value="1"/>
</dbReference>
<dbReference type="SUPFAM" id="SSF56601">
    <property type="entry name" value="beta-lactamase/transpeptidase-like"/>
    <property type="match status" value="1"/>
</dbReference>
<evidence type="ECO:0000255" key="1">
    <source>
        <dbReference type="HAMAP-Rule" id="MF_00313"/>
    </source>
</evidence>
<comment type="catalytic activity">
    <reaction evidence="1">
        <text>L-glutamine + H2O = L-glutamate + NH4(+)</text>
        <dbReference type="Rhea" id="RHEA:15889"/>
        <dbReference type="ChEBI" id="CHEBI:15377"/>
        <dbReference type="ChEBI" id="CHEBI:28938"/>
        <dbReference type="ChEBI" id="CHEBI:29985"/>
        <dbReference type="ChEBI" id="CHEBI:58359"/>
        <dbReference type="EC" id="3.5.1.2"/>
    </reaction>
</comment>
<comment type="subunit">
    <text evidence="1">Homotetramer.</text>
</comment>
<comment type="similarity">
    <text evidence="1">Belongs to the glutaminase family.</text>
</comment>
<gene>
    <name evidence="1" type="primary">glsA</name>
    <name type="ordered locus">Sbal195_3193</name>
</gene>
<organism>
    <name type="scientific">Shewanella baltica (strain OS195)</name>
    <dbReference type="NCBI Taxonomy" id="399599"/>
    <lineage>
        <taxon>Bacteria</taxon>
        <taxon>Pseudomonadati</taxon>
        <taxon>Pseudomonadota</taxon>
        <taxon>Gammaproteobacteria</taxon>
        <taxon>Alteromonadales</taxon>
        <taxon>Shewanellaceae</taxon>
        <taxon>Shewanella</taxon>
    </lineage>
</organism>
<feature type="chain" id="PRO_1000079079" description="Glutaminase">
    <location>
        <begin position="1"/>
        <end position="304"/>
    </location>
</feature>
<feature type="binding site" evidence="1">
    <location>
        <position position="63"/>
    </location>
    <ligand>
        <name>substrate</name>
    </ligand>
</feature>
<feature type="binding site" evidence="1">
    <location>
        <position position="114"/>
    </location>
    <ligand>
        <name>substrate</name>
    </ligand>
</feature>
<feature type="binding site" evidence="1">
    <location>
        <position position="158"/>
    </location>
    <ligand>
        <name>substrate</name>
    </ligand>
</feature>
<feature type="binding site" evidence="1">
    <location>
        <position position="165"/>
    </location>
    <ligand>
        <name>substrate</name>
    </ligand>
</feature>
<feature type="binding site" evidence="1">
    <location>
        <position position="189"/>
    </location>
    <ligand>
        <name>substrate</name>
    </ligand>
</feature>
<feature type="binding site" evidence="1">
    <location>
        <position position="240"/>
    </location>
    <ligand>
        <name>substrate</name>
    </ligand>
</feature>
<feature type="binding site" evidence="1">
    <location>
        <position position="258"/>
    </location>
    <ligand>
        <name>substrate</name>
    </ligand>
</feature>
<reference key="1">
    <citation type="submission" date="2007-11" db="EMBL/GenBank/DDBJ databases">
        <title>Complete sequence of chromosome of Shewanella baltica OS195.</title>
        <authorList>
            <consortium name="US DOE Joint Genome Institute"/>
            <person name="Copeland A."/>
            <person name="Lucas S."/>
            <person name="Lapidus A."/>
            <person name="Barry K."/>
            <person name="Glavina del Rio T."/>
            <person name="Dalin E."/>
            <person name="Tice H."/>
            <person name="Pitluck S."/>
            <person name="Chain P."/>
            <person name="Malfatti S."/>
            <person name="Shin M."/>
            <person name="Vergez L."/>
            <person name="Schmutz J."/>
            <person name="Larimer F."/>
            <person name="Land M."/>
            <person name="Hauser L."/>
            <person name="Kyrpides N."/>
            <person name="Kim E."/>
            <person name="Brettar I."/>
            <person name="Rodrigues J."/>
            <person name="Konstantinidis K."/>
            <person name="Klappenbach J."/>
            <person name="Hofle M."/>
            <person name="Tiedje J."/>
            <person name="Richardson P."/>
        </authorList>
    </citation>
    <scope>NUCLEOTIDE SEQUENCE [LARGE SCALE GENOMIC DNA]</scope>
    <source>
        <strain>OS195</strain>
    </source>
</reference>
<keyword id="KW-0378">Hydrolase</keyword>
<proteinExistence type="inferred from homology"/>
<accession>A9KXQ3</accession>
<protein>
    <recommendedName>
        <fullName evidence="1">Glutaminase</fullName>
        <ecNumber evidence="1">3.5.1.2</ecNumber>
    </recommendedName>
</protein>
<sequence length="304" mass="32782">MPELALLEEVVEKVRPLLGQGKVADYIPALASVDAGKLGIAVTTVDGETLGAGDYLEPFSIQSISKVFSLTLALTLYEEAEIWSRVGKEPSGHSFNSLVQVELERGKPRNPFINAGALVIADLLQSRLGAPKHRMLELVRQLSQNDKVSFDKQVADSEYQHSARNAAIAYLMKSFGNFQGDVDTVLRTYFHYCALKMNCADLSKAMLYLANRGKSITGTELISQVQTRQLNALLATSGLYDGAGEFAYRVGMPGKSGVGGGIIAVIPGELSICVWSPELDGNGNSLAGTAMLEHLSQRLGRSIF</sequence>